<name>RL35_HAEI8</name>
<dbReference type="EMBL" id="CP000057">
    <property type="protein sequence ID" value="AAX88440.1"/>
    <property type="status" value="ALT_INIT"/>
    <property type="molecule type" value="Genomic_DNA"/>
</dbReference>
<dbReference type="RefSeq" id="WP_005596065.1">
    <property type="nucleotide sequence ID" value="NC_007146.2"/>
</dbReference>
<dbReference type="SMR" id="Q4QKK7"/>
<dbReference type="GeneID" id="93297699"/>
<dbReference type="KEGG" id="hit:NTHI1642"/>
<dbReference type="HOGENOM" id="CLU_169643_1_1_6"/>
<dbReference type="Proteomes" id="UP000002525">
    <property type="component" value="Chromosome"/>
</dbReference>
<dbReference type="GO" id="GO:0022625">
    <property type="term" value="C:cytosolic large ribosomal subunit"/>
    <property type="evidence" value="ECO:0007669"/>
    <property type="project" value="TreeGrafter"/>
</dbReference>
<dbReference type="GO" id="GO:0003735">
    <property type="term" value="F:structural constituent of ribosome"/>
    <property type="evidence" value="ECO:0007669"/>
    <property type="project" value="InterPro"/>
</dbReference>
<dbReference type="GO" id="GO:0006412">
    <property type="term" value="P:translation"/>
    <property type="evidence" value="ECO:0007669"/>
    <property type="project" value="UniProtKB-UniRule"/>
</dbReference>
<dbReference type="FunFam" id="4.10.410.60:FF:000001">
    <property type="entry name" value="50S ribosomal protein L35"/>
    <property type="match status" value="1"/>
</dbReference>
<dbReference type="Gene3D" id="4.10.410.60">
    <property type="match status" value="1"/>
</dbReference>
<dbReference type="HAMAP" id="MF_00514">
    <property type="entry name" value="Ribosomal_bL35"/>
    <property type="match status" value="1"/>
</dbReference>
<dbReference type="InterPro" id="IPR001706">
    <property type="entry name" value="Ribosomal_bL35"/>
</dbReference>
<dbReference type="InterPro" id="IPR021137">
    <property type="entry name" value="Ribosomal_bL35-like"/>
</dbReference>
<dbReference type="InterPro" id="IPR018265">
    <property type="entry name" value="Ribosomal_bL35_CS"/>
</dbReference>
<dbReference type="InterPro" id="IPR037229">
    <property type="entry name" value="Ribosomal_bL35_sf"/>
</dbReference>
<dbReference type="NCBIfam" id="TIGR00001">
    <property type="entry name" value="rpmI_bact"/>
    <property type="match status" value="1"/>
</dbReference>
<dbReference type="PANTHER" id="PTHR33343">
    <property type="entry name" value="54S RIBOSOMAL PROTEIN BL35M"/>
    <property type="match status" value="1"/>
</dbReference>
<dbReference type="PANTHER" id="PTHR33343:SF1">
    <property type="entry name" value="LARGE RIBOSOMAL SUBUNIT PROTEIN BL35M"/>
    <property type="match status" value="1"/>
</dbReference>
<dbReference type="Pfam" id="PF01632">
    <property type="entry name" value="Ribosomal_L35p"/>
    <property type="match status" value="1"/>
</dbReference>
<dbReference type="PRINTS" id="PR00064">
    <property type="entry name" value="RIBOSOMALL35"/>
</dbReference>
<dbReference type="SUPFAM" id="SSF143034">
    <property type="entry name" value="L35p-like"/>
    <property type="match status" value="1"/>
</dbReference>
<dbReference type="PROSITE" id="PS00936">
    <property type="entry name" value="RIBOSOMAL_L35"/>
    <property type="match status" value="1"/>
</dbReference>
<gene>
    <name evidence="1" type="primary">rpmI</name>
    <name type="ordered locus">NTHI1642</name>
</gene>
<sequence>MPKIKTVRGAAKRFKKTASGGFKRKQSHLRHILTKKTTKRKRHLRHKSMVAKADQVLVVACLPYA</sequence>
<proteinExistence type="inferred from homology"/>
<feature type="chain" id="PRO_0000258686" description="Large ribosomal subunit protein bL35">
    <location>
        <begin position="1"/>
        <end position="65"/>
    </location>
</feature>
<feature type="region of interest" description="Disordered" evidence="2">
    <location>
        <begin position="1"/>
        <end position="26"/>
    </location>
</feature>
<feature type="compositionally biased region" description="Basic residues" evidence="2">
    <location>
        <begin position="10"/>
        <end position="26"/>
    </location>
</feature>
<comment type="similarity">
    <text evidence="1">Belongs to the bacterial ribosomal protein bL35 family.</text>
</comment>
<comment type="sequence caution" evidence="3">
    <conflict type="erroneous initiation">
        <sequence resource="EMBL-CDS" id="AAX88440"/>
    </conflict>
</comment>
<reference key="1">
    <citation type="journal article" date="2005" name="J. Bacteriol.">
        <title>Genomic sequence of an otitis media isolate of nontypeable Haemophilus influenzae: comparative study with H. influenzae serotype d, strain KW20.</title>
        <authorList>
            <person name="Harrison A."/>
            <person name="Dyer D.W."/>
            <person name="Gillaspy A."/>
            <person name="Ray W.C."/>
            <person name="Mungur R."/>
            <person name="Carson M.B."/>
            <person name="Zhong H."/>
            <person name="Gipson J."/>
            <person name="Gipson M."/>
            <person name="Johnson L.S."/>
            <person name="Lewis L."/>
            <person name="Bakaletz L.O."/>
            <person name="Munson R.S. Jr."/>
        </authorList>
    </citation>
    <scope>NUCLEOTIDE SEQUENCE [LARGE SCALE GENOMIC DNA]</scope>
    <source>
        <strain>86-028NP</strain>
    </source>
</reference>
<accession>Q4QKK7</accession>
<keyword id="KW-0687">Ribonucleoprotein</keyword>
<keyword id="KW-0689">Ribosomal protein</keyword>
<evidence type="ECO:0000255" key="1">
    <source>
        <dbReference type="HAMAP-Rule" id="MF_00514"/>
    </source>
</evidence>
<evidence type="ECO:0000256" key="2">
    <source>
        <dbReference type="SAM" id="MobiDB-lite"/>
    </source>
</evidence>
<evidence type="ECO:0000305" key="3"/>
<protein>
    <recommendedName>
        <fullName evidence="1">Large ribosomal subunit protein bL35</fullName>
    </recommendedName>
    <alternativeName>
        <fullName evidence="3">50S ribosomal protein L35</fullName>
    </alternativeName>
</protein>
<organism>
    <name type="scientific">Haemophilus influenzae (strain 86-028NP)</name>
    <dbReference type="NCBI Taxonomy" id="281310"/>
    <lineage>
        <taxon>Bacteria</taxon>
        <taxon>Pseudomonadati</taxon>
        <taxon>Pseudomonadota</taxon>
        <taxon>Gammaproteobacteria</taxon>
        <taxon>Pasteurellales</taxon>
        <taxon>Pasteurellaceae</taxon>
        <taxon>Haemophilus</taxon>
    </lineage>
</organism>